<accession>A8YXL6</accession>
<feature type="chain" id="PRO_1000073260" description="Large ribosomal subunit protein uL24">
    <location>
        <begin position="1"/>
        <end position="77"/>
    </location>
</feature>
<feature type="region of interest" description="Disordered" evidence="2">
    <location>
        <begin position="42"/>
        <end position="61"/>
    </location>
</feature>
<keyword id="KW-0687">Ribonucleoprotein</keyword>
<keyword id="KW-0689">Ribosomal protein</keyword>
<keyword id="KW-0694">RNA-binding</keyword>
<keyword id="KW-0699">rRNA-binding</keyword>
<protein>
    <recommendedName>
        <fullName evidence="1">Large ribosomal subunit protein uL24</fullName>
    </recommendedName>
    <alternativeName>
        <fullName evidence="3">50S ribosomal protein L24</fullName>
    </alternativeName>
</protein>
<name>RL24_LACH4</name>
<dbReference type="EMBL" id="CP000517">
    <property type="protein sequence ID" value="ABX26547.1"/>
    <property type="molecule type" value="Genomic_DNA"/>
</dbReference>
<dbReference type="RefSeq" id="WP_012211381.1">
    <property type="nucleotide sequence ID" value="NC_010080.1"/>
</dbReference>
<dbReference type="SMR" id="A8YXL6"/>
<dbReference type="GeneID" id="83725536"/>
<dbReference type="KEGG" id="lhe:lhv_0323"/>
<dbReference type="eggNOG" id="COG0198">
    <property type="taxonomic scope" value="Bacteria"/>
</dbReference>
<dbReference type="HOGENOM" id="CLU_093315_2_2_9"/>
<dbReference type="Proteomes" id="UP000000790">
    <property type="component" value="Chromosome"/>
</dbReference>
<dbReference type="GO" id="GO:1990904">
    <property type="term" value="C:ribonucleoprotein complex"/>
    <property type="evidence" value="ECO:0007669"/>
    <property type="project" value="UniProtKB-KW"/>
</dbReference>
<dbReference type="GO" id="GO:0005840">
    <property type="term" value="C:ribosome"/>
    <property type="evidence" value="ECO:0007669"/>
    <property type="project" value="UniProtKB-KW"/>
</dbReference>
<dbReference type="GO" id="GO:0019843">
    <property type="term" value="F:rRNA binding"/>
    <property type="evidence" value="ECO:0007669"/>
    <property type="project" value="UniProtKB-UniRule"/>
</dbReference>
<dbReference type="GO" id="GO:0003735">
    <property type="term" value="F:structural constituent of ribosome"/>
    <property type="evidence" value="ECO:0007669"/>
    <property type="project" value="InterPro"/>
</dbReference>
<dbReference type="GO" id="GO:0006412">
    <property type="term" value="P:translation"/>
    <property type="evidence" value="ECO:0007669"/>
    <property type="project" value="UniProtKB-UniRule"/>
</dbReference>
<dbReference type="CDD" id="cd06089">
    <property type="entry name" value="KOW_RPL26"/>
    <property type="match status" value="1"/>
</dbReference>
<dbReference type="Gene3D" id="2.30.30.30">
    <property type="match status" value="1"/>
</dbReference>
<dbReference type="HAMAP" id="MF_01326_B">
    <property type="entry name" value="Ribosomal_uL24_B"/>
    <property type="match status" value="1"/>
</dbReference>
<dbReference type="InterPro" id="IPR005824">
    <property type="entry name" value="KOW"/>
</dbReference>
<dbReference type="InterPro" id="IPR014722">
    <property type="entry name" value="Rib_uL2_dom2"/>
</dbReference>
<dbReference type="InterPro" id="IPR003256">
    <property type="entry name" value="Ribosomal_uL24"/>
</dbReference>
<dbReference type="InterPro" id="IPR005825">
    <property type="entry name" value="Ribosomal_uL24_CS"/>
</dbReference>
<dbReference type="InterPro" id="IPR041988">
    <property type="entry name" value="Ribosomal_uL24_KOW"/>
</dbReference>
<dbReference type="InterPro" id="IPR008991">
    <property type="entry name" value="Translation_prot_SH3-like_sf"/>
</dbReference>
<dbReference type="NCBIfam" id="TIGR01079">
    <property type="entry name" value="rplX_bact"/>
    <property type="match status" value="1"/>
</dbReference>
<dbReference type="PANTHER" id="PTHR12903">
    <property type="entry name" value="MITOCHONDRIAL RIBOSOMAL PROTEIN L24"/>
    <property type="match status" value="1"/>
</dbReference>
<dbReference type="Pfam" id="PF00467">
    <property type="entry name" value="KOW"/>
    <property type="match status" value="1"/>
</dbReference>
<dbReference type="Pfam" id="PF17136">
    <property type="entry name" value="ribosomal_L24"/>
    <property type="match status" value="1"/>
</dbReference>
<dbReference type="SMART" id="SM00739">
    <property type="entry name" value="KOW"/>
    <property type="match status" value="1"/>
</dbReference>
<dbReference type="SUPFAM" id="SSF50104">
    <property type="entry name" value="Translation proteins SH3-like domain"/>
    <property type="match status" value="1"/>
</dbReference>
<dbReference type="PROSITE" id="PS01108">
    <property type="entry name" value="RIBOSOMAL_L24"/>
    <property type="match status" value="1"/>
</dbReference>
<comment type="function">
    <text evidence="1">One of two assembly initiator proteins, it binds directly to the 5'-end of the 23S rRNA, where it nucleates assembly of the 50S subunit.</text>
</comment>
<comment type="function">
    <text evidence="1">One of the proteins that surrounds the polypeptide exit tunnel on the outside of the subunit.</text>
</comment>
<comment type="subunit">
    <text evidence="1">Part of the 50S ribosomal subunit.</text>
</comment>
<comment type="similarity">
    <text evidence="1">Belongs to the universal ribosomal protein uL24 family.</text>
</comment>
<reference key="1">
    <citation type="journal article" date="2008" name="J. Bacteriol.">
        <title>Genome sequence of Lactobacillus helveticus: an organism distinguished by selective gene loss and IS element expansion.</title>
        <authorList>
            <person name="Callanan M."/>
            <person name="Kaleta P."/>
            <person name="O'Callaghan J."/>
            <person name="O'Sullivan O."/>
            <person name="Jordan K."/>
            <person name="McAuliffe O."/>
            <person name="Sangrador-Vegas A."/>
            <person name="Slattery L."/>
            <person name="Fitzgerald G.F."/>
            <person name="Beresford T."/>
            <person name="Ross R.P."/>
        </authorList>
    </citation>
    <scope>NUCLEOTIDE SEQUENCE [LARGE SCALE GENOMIC DNA]</scope>
    <source>
        <strain>DPC 4571</strain>
    </source>
</reference>
<sequence>MFVKTGDKVKVIAGKDKGKEGTVLSINVKKNRVVVKGVNKIKKHQKPSQTNANGGVVESEGSIHASNVKVISKKEDK</sequence>
<evidence type="ECO:0000255" key="1">
    <source>
        <dbReference type="HAMAP-Rule" id="MF_01326"/>
    </source>
</evidence>
<evidence type="ECO:0000256" key="2">
    <source>
        <dbReference type="SAM" id="MobiDB-lite"/>
    </source>
</evidence>
<evidence type="ECO:0000305" key="3"/>
<proteinExistence type="inferred from homology"/>
<gene>
    <name evidence="1" type="primary">rplX</name>
    <name type="ordered locus">lhv_0323</name>
</gene>
<organism>
    <name type="scientific">Lactobacillus helveticus (strain DPC 4571)</name>
    <dbReference type="NCBI Taxonomy" id="405566"/>
    <lineage>
        <taxon>Bacteria</taxon>
        <taxon>Bacillati</taxon>
        <taxon>Bacillota</taxon>
        <taxon>Bacilli</taxon>
        <taxon>Lactobacillales</taxon>
        <taxon>Lactobacillaceae</taxon>
        <taxon>Lactobacillus</taxon>
    </lineage>
</organism>